<comment type="function">
    <text evidence="1">Component of the Mediator complex, a coactivator involved in the regulated transcription of nearly all RNA polymerase II-dependent genes. Mediator functions as a bridge to convey information from gene-specific regulatory proteins to the basal RNA polymerase II transcription machinery. Mediator is recruited to promoters by direct interactions with regulatory proteins and serves as a scaffold for the assembly of a functional preinitiation complex with RNA polymerase II and the general transcription factors (By similarity).</text>
</comment>
<comment type="subunit">
    <text evidence="1">Component of the Mediator complex.</text>
</comment>
<comment type="subcellular location">
    <subcellularLocation>
        <location evidence="1">Nucleus</location>
    </subcellularLocation>
</comment>
<comment type="similarity">
    <text evidence="4">Belongs to the Mediator complex subunit 4 family.</text>
</comment>
<sequence length="336" mass="37035">MNSTPANSTPLPPLQPFTPGSSAATPAPIALTRSKPRRRLSSNVVGVSDRRRLLQMLQNVEEVSPGPDSASEAGESPSIRSQDEAHLEHLSSARICMDEDKELLIHQALPAFENTLLRFVQALSKYDFRQDLAETLMETESQFCEAVDELVEHQQAAQTIAALERVSEGLDDKIRDMIRKLAECRRELRNYQPNNENQSTLSSADLLTYATRIANFTTAPPYFRERPEHSKLPWPIEDEMRKGLLALMEVGKDKTELGELADPEKFAHTAANGVAPNGAAPVANGVAQNHNNGYAMERRLSTGYGSDNDGDTNMNGRSGLAGLDIFDDDDDDDDDD</sequence>
<organism>
    <name type="scientific">Yarrowia lipolytica (strain CLIB 122 / E 150)</name>
    <name type="common">Yeast</name>
    <name type="synonym">Candida lipolytica</name>
    <dbReference type="NCBI Taxonomy" id="284591"/>
    <lineage>
        <taxon>Eukaryota</taxon>
        <taxon>Fungi</taxon>
        <taxon>Dikarya</taxon>
        <taxon>Ascomycota</taxon>
        <taxon>Saccharomycotina</taxon>
        <taxon>Dipodascomycetes</taxon>
        <taxon>Dipodascales</taxon>
        <taxon>Dipodascales incertae sedis</taxon>
        <taxon>Yarrowia</taxon>
    </lineage>
</organism>
<proteinExistence type="inferred from homology"/>
<evidence type="ECO:0000250" key="1"/>
<evidence type="ECO:0000255" key="2"/>
<evidence type="ECO:0000256" key="3">
    <source>
        <dbReference type="SAM" id="MobiDB-lite"/>
    </source>
</evidence>
<evidence type="ECO:0000305" key="4"/>
<gene>
    <name type="primary">MED4</name>
    <name type="ordered locus">YALI0F01144g</name>
</gene>
<name>MED4_YARLI</name>
<feature type="chain" id="PRO_0000302081" description="Mediator of RNA polymerase II transcription subunit 4">
    <location>
        <begin position="1"/>
        <end position="336"/>
    </location>
</feature>
<feature type="region of interest" description="Disordered" evidence="3">
    <location>
        <begin position="1"/>
        <end position="45"/>
    </location>
</feature>
<feature type="region of interest" description="Disordered" evidence="3">
    <location>
        <begin position="59"/>
        <end position="85"/>
    </location>
</feature>
<feature type="region of interest" description="Disordered" evidence="3">
    <location>
        <begin position="281"/>
        <end position="336"/>
    </location>
</feature>
<feature type="coiled-coil region" evidence="2">
    <location>
        <begin position="154"/>
        <end position="192"/>
    </location>
</feature>
<feature type="compositionally biased region" description="Acidic residues" evidence="3">
    <location>
        <begin position="325"/>
        <end position="336"/>
    </location>
</feature>
<accession>Q8WZL6</accession>
<accession>Q6C3B1</accession>
<protein>
    <recommendedName>
        <fullName>Mediator of RNA polymerase II transcription subunit 4</fullName>
    </recommendedName>
    <alternativeName>
        <fullName>Mediator complex subunit 4</fullName>
    </alternativeName>
    <alternativeName>
        <fullName>YlMED4</fullName>
    </alternativeName>
</protein>
<reference key="1">
    <citation type="journal article" date="2002" name="Genetics">
        <title>Genetic control of extracellular protease synthesis in the yeast Yarrowia lipolytica.</title>
        <authorList>
            <person name="Gonzalez-Lopez C.I."/>
            <person name="Szabo R."/>
            <person name="Blanchin-Roland S."/>
            <person name="Gaillardin C."/>
        </authorList>
    </citation>
    <scope>NUCLEOTIDE SEQUENCE [GENOMIC DNA]</scope>
    <source>
        <strain>SY12</strain>
    </source>
</reference>
<reference key="2">
    <citation type="journal article" date="2004" name="Nature">
        <title>Genome evolution in yeasts.</title>
        <authorList>
            <person name="Dujon B."/>
            <person name="Sherman D."/>
            <person name="Fischer G."/>
            <person name="Durrens P."/>
            <person name="Casaregola S."/>
            <person name="Lafontaine I."/>
            <person name="de Montigny J."/>
            <person name="Marck C."/>
            <person name="Neuveglise C."/>
            <person name="Talla E."/>
            <person name="Goffard N."/>
            <person name="Frangeul L."/>
            <person name="Aigle M."/>
            <person name="Anthouard V."/>
            <person name="Babour A."/>
            <person name="Barbe V."/>
            <person name="Barnay S."/>
            <person name="Blanchin S."/>
            <person name="Beckerich J.-M."/>
            <person name="Beyne E."/>
            <person name="Bleykasten C."/>
            <person name="Boisrame A."/>
            <person name="Boyer J."/>
            <person name="Cattolico L."/>
            <person name="Confanioleri F."/>
            <person name="de Daruvar A."/>
            <person name="Despons L."/>
            <person name="Fabre E."/>
            <person name="Fairhead C."/>
            <person name="Ferry-Dumazet H."/>
            <person name="Groppi A."/>
            <person name="Hantraye F."/>
            <person name="Hennequin C."/>
            <person name="Jauniaux N."/>
            <person name="Joyet P."/>
            <person name="Kachouri R."/>
            <person name="Kerrest A."/>
            <person name="Koszul R."/>
            <person name="Lemaire M."/>
            <person name="Lesur I."/>
            <person name="Ma L."/>
            <person name="Muller H."/>
            <person name="Nicaud J.-M."/>
            <person name="Nikolski M."/>
            <person name="Oztas S."/>
            <person name="Ozier-Kalogeropoulos O."/>
            <person name="Pellenz S."/>
            <person name="Potier S."/>
            <person name="Richard G.-F."/>
            <person name="Straub M.-L."/>
            <person name="Suleau A."/>
            <person name="Swennen D."/>
            <person name="Tekaia F."/>
            <person name="Wesolowski-Louvel M."/>
            <person name="Westhof E."/>
            <person name="Wirth B."/>
            <person name="Zeniou-Meyer M."/>
            <person name="Zivanovic Y."/>
            <person name="Bolotin-Fukuhara M."/>
            <person name="Thierry A."/>
            <person name="Bouchier C."/>
            <person name="Caudron B."/>
            <person name="Scarpelli C."/>
            <person name="Gaillardin C."/>
            <person name="Weissenbach J."/>
            <person name="Wincker P."/>
            <person name="Souciet J.-L."/>
        </authorList>
    </citation>
    <scope>NUCLEOTIDE SEQUENCE [LARGE SCALE GENOMIC DNA]</scope>
    <source>
        <strain>CLIB 122 / E 150</strain>
    </source>
</reference>
<dbReference type="EMBL" id="AJ315749">
    <property type="protein sequence ID" value="CAC86052.1"/>
    <property type="molecule type" value="Genomic_DNA"/>
</dbReference>
<dbReference type="EMBL" id="CR382132">
    <property type="protein sequence ID" value="CAG77653.1"/>
    <property type="molecule type" value="Genomic_DNA"/>
</dbReference>
<dbReference type="RefSeq" id="XP_504851.1">
    <property type="nucleotide sequence ID" value="XM_504851.1"/>
</dbReference>
<dbReference type="SMR" id="Q8WZL6"/>
<dbReference type="FunCoup" id="Q8WZL6">
    <property type="interactions" value="248"/>
</dbReference>
<dbReference type="STRING" id="284591.Q8WZL6"/>
<dbReference type="EnsemblFungi" id="CAG77653">
    <property type="protein sequence ID" value="CAG77653"/>
    <property type="gene ID" value="YALI0_F01144g"/>
</dbReference>
<dbReference type="KEGG" id="yli:2907721"/>
<dbReference type="VEuPathDB" id="FungiDB:YALI0_F01144g"/>
<dbReference type="HOGENOM" id="CLU_826926_0_0_1"/>
<dbReference type="InParanoid" id="Q8WZL6"/>
<dbReference type="OMA" id="PFQIHPN"/>
<dbReference type="OrthoDB" id="112695at4891"/>
<dbReference type="Proteomes" id="UP000001300">
    <property type="component" value="Chromosome F"/>
</dbReference>
<dbReference type="GO" id="GO:0070847">
    <property type="term" value="C:core mediator complex"/>
    <property type="evidence" value="ECO:0000318"/>
    <property type="project" value="GO_Central"/>
</dbReference>
<dbReference type="GO" id="GO:0016592">
    <property type="term" value="C:mediator complex"/>
    <property type="evidence" value="ECO:0007669"/>
    <property type="project" value="InterPro"/>
</dbReference>
<dbReference type="GO" id="GO:0003712">
    <property type="term" value="F:transcription coregulator activity"/>
    <property type="evidence" value="ECO:0000318"/>
    <property type="project" value="GO_Central"/>
</dbReference>
<dbReference type="GO" id="GO:0006357">
    <property type="term" value="P:regulation of transcription by RNA polymerase II"/>
    <property type="evidence" value="ECO:0000318"/>
    <property type="project" value="GO_Central"/>
</dbReference>
<dbReference type="InterPro" id="IPR019258">
    <property type="entry name" value="Mediator_Med4"/>
</dbReference>
<dbReference type="PANTHER" id="PTHR13208">
    <property type="entry name" value="MEDIATOR OF RNA POLYMERASE II TRANSCRIPTION SUBUNIT 4"/>
    <property type="match status" value="1"/>
</dbReference>
<dbReference type="PANTHER" id="PTHR13208:SF2">
    <property type="entry name" value="MEDIATOR OF RNA POLYMERASE II TRANSCRIPTION SUBUNIT 4"/>
    <property type="match status" value="1"/>
</dbReference>
<dbReference type="Pfam" id="PF10018">
    <property type="entry name" value="Med4"/>
    <property type="match status" value="1"/>
</dbReference>
<keyword id="KW-0010">Activator</keyword>
<keyword id="KW-0175">Coiled coil</keyword>
<keyword id="KW-0539">Nucleus</keyword>
<keyword id="KW-1185">Reference proteome</keyword>
<keyword id="KW-0804">Transcription</keyword>
<keyword id="KW-0805">Transcription regulation</keyword>